<name>RL19_HELPY</name>
<reference key="1">
    <citation type="journal article" date="1997" name="Nature">
        <title>The complete genome sequence of the gastric pathogen Helicobacter pylori.</title>
        <authorList>
            <person name="Tomb J.-F."/>
            <person name="White O."/>
            <person name="Kerlavage A.R."/>
            <person name="Clayton R.A."/>
            <person name="Sutton G.G."/>
            <person name="Fleischmann R.D."/>
            <person name="Ketchum K.A."/>
            <person name="Klenk H.-P."/>
            <person name="Gill S.R."/>
            <person name="Dougherty B.A."/>
            <person name="Nelson K.E."/>
            <person name="Quackenbush J."/>
            <person name="Zhou L."/>
            <person name="Kirkness E.F."/>
            <person name="Peterson S.N."/>
            <person name="Loftus B.J."/>
            <person name="Richardson D.L."/>
            <person name="Dodson R.J."/>
            <person name="Khalak H.G."/>
            <person name="Glodek A."/>
            <person name="McKenney K."/>
            <person name="FitzGerald L.M."/>
            <person name="Lee N."/>
            <person name="Adams M.D."/>
            <person name="Hickey E.K."/>
            <person name="Berg D.E."/>
            <person name="Gocayne J.D."/>
            <person name="Utterback T.R."/>
            <person name="Peterson J.D."/>
            <person name="Kelley J.M."/>
            <person name="Cotton M.D."/>
            <person name="Weidman J.F."/>
            <person name="Fujii C."/>
            <person name="Bowman C."/>
            <person name="Watthey L."/>
            <person name="Wallin E."/>
            <person name="Hayes W.S."/>
            <person name="Borodovsky M."/>
            <person name="Karp P.D."/>
            <person name="Smith H.O."/>
            <person name="Fraser C.M."/>
            <person name="Venter J.C."/>
        </authorList>
    </citation>
    <scope>NUCLEOTIDE SEQUENCE [LARGE SCALE GENOMIC DNA]</scope>
    <source>
        <strain>ATCC 700392 / 26695</strain>
    </source>
</reference>
<accession>P56044</accession>
<proteinExistence type="inferred from homology"/>
<keyword id="KW-1185">Reference proteome</keyword>
<keyword id="KW-0687">Ribonucleoprotein</keyword>
<keyword id="KW-0689">Ribosomal protein</keyword>
<feature type="chain" id="PRO_0000163465" description="Large ribosomal subunit protein bL19">
    <location>
        <begin position="1"/>
        <end position="118"/>
    </location>
</feature>
<protein>
    <recommendedName>
        <fullName evidence="2">Large ribosomal subunit protein bL19</fullName>
    </recommendedName>
    <alternativeName>
        <fullName>50S ribosomal protein L19</fullName>
    </alternativeName>
</protein>
<evidence type="ECO:0000250" key="1"/>
<evidence type="ECO:0000305" key="2"/>
<gene>
    <name type="primary">rplS</name>
    <name type="ordered locus">HP_1147</name>
</gene>
<dbReference type="EMBL" id="AE000511">
    <property type="protein sequence ID" value="AAD08191.1"/>
    <property type="molecule type" value="Genomic_DNA"/>
</dbReference>
<dbReference type="PIR" id="C64663">
    <property type="entry name" value="C64663"/>
</dbReference>
<dbReference type="RefSeq" id="NP_207938.1">
    <property type="nucleotide sequence ID" value="NC_000915.1"/>
</dbReference>
<dbReference type="RefSeq" id="WP_000797699.1">
    <property type="nucleotide sequence ID" value="NC_018939.1"/>
</dbReference>
<dbReference type="SMR" id="P56044"/>
<dbReference type="FunCoup" id="P56044">
    <property type="interactions" value="451"/>
</dbReference>
<dbReference type="IntAct" id="P56044">
    <property type="interactions" value="3"/>
</dbReference>
<dbReference type="STRING" id="85962.HP_1147"/>
<dbReference type="PaxDb" id="85962-C694_05925"/>
<dbReference type="EnsemblBacteria" id="AAD08191">
    <property type="protein sequence ID" value="AAD08191"/>
    <property type="gene ID" value="HP_1147"/>
</dbReference>
<dbReference type="KEGG" id="heo:C694_05925"/>
<dbReference type="KEGG" id="hpy:HP_1147"/>
<dbReference type="PATRIC" id="fig|85962.47.peg.1231"/>
<dbReference type="eggNOG" id="COG0335">
    <property type="taxonomic scope" value="Bacteria"/>
</dbReference>
<dbReference type="InParanoid" id="P56044"/>
<dbReference type="OrthoDB" id="9803541at2"/>
<dbReference type="PhylomeDB" id="P56044"/>
<dbReference type="Proteomes" id="UP000000429">
    <property type="component" value="Chromosome"/>
</dbReference>
<dbReference type="GO" id="GO:0022625">
    <property type="term" value="C:cytosolic large ribosomal subunit"/>
    <property type="evidence" value="ECO:0000318"/>
    <property type="project" value="GO_Central"/>
</dbReference>
<dbReference type="GO" id="GO:0003735">
    <property type="term" value="F:structural constituent of ribosome"/>
    <property type="evidence" value="ECO:0000318"/>
    <property type="project" value="GO_Central"/>
</dbReference>
<dbReference type="GO" id="GO:0006412">
    <property type="term" value="P:translation"/>
    <property type="evidence" value="ECO:0007669"/>
    <property type="project" value="UniProtKB-UniRule"/>
</dbReference>
<dbReference type="FunFam" id="2.30.30.790:FF:000001">
    <property type="entry name" value="50S ribosomal protein L19"/>
    <property type="match status" value="1"/>
</dbReference>
<dbReference type="Gene3D" id="2.30.30.790">
    <property type="match status" value="1"/>
</dbReference>
<dbReference type="HAMAP" id="MF_00402">
    <property type="entry name" value="Ribosomal_bL19"/>
    <property type="match status" value="1"/>
</dbReference>
<dbReference type="InterPro" id="IPR001857">
    <property type="entry name" value="Ribosomal_bL19"/>
</dbReference>
<dbReference type="InterPro" id="IPR018257">
    <property type="entry name" value="Ribosomal_bL19_CS"/>
</dbReference>
<dbReference type="InterPro" id="IPR038657">
    <property type="entry name" value="Ribosomal_bL19_sf"/>
</dbReference>
<dbReference type="InterPro" id="IPR008991">
    <property type="entry name" value="Translation_prot_SH3-like_sf"/>
</dbReference>
<dbReference type="NCBIfam" id="TIGR01024">
    <property type="entry name" value="rplS_bact"/>
    <property type="match status" value="1"/>
</dbReference>
<dbReference type="PANTHER" id="PTHR15680:SF9">
    <property type="entry name" value="LARGE RIBOSOMAL SUBUNIT PROTEIN BL19M"/>
    <property type="match status" value="1"/>
</dbReference>
<dbReference type="PANTHER" id="PTHR15680">
    <property type="entry name" value="RIBOSOMAL PROTEIN L19"/>
    <property type="match status" value="1"/>
</dbReference>
<dbReference type="Pfam" id="PF01245">
    <property type="entry name" value="Ribosomal_L19"/>
    <property type="match status" value="1"/>
</dbReference>
<dbReference type="PIRSF" id="PIRSF002191">
    <property type="entry name" value="Ribosomal_L19"/>
    <property type="match status" value="1"/>
</dbReference>
<dbReference type="PRINTS" id="PR00061">
    <property type="entry name" value="RIBOSOMALL19"/>
</dbReference>
<dbReference type="SUPFAM" id="SSF50104">
    <property type="entry name" value="Translation proteins SH3-like domain"/>
    <property type="match status" value="1"/>
</dbReference>
<dbReference type="PROSITE" id="PS01015">
    <property type="entry name" value="RIBOSOMAL_L19"/>
    <property type="match status" value="1"/>
</dbReference>
<sequence>MKNRYIQQFEDAQLKDKTMPAFKAGDTLRLGITIKEGEKTRTQYFEGVCIAIRGNGVDKTFCVRKIGANNIGVEKIFPFYSESLASVEVLRVGRVRRAKLYYLRDRRGKAARIKEVRH</sequence>
<organism>
    <name type="scientific">Helicobacter pylori (strain ATCC 700392 / 26695)</name>
    <name type="common">Campylobacter pylori</name>
    <dbReference type="NCBI Taxonomy" id="85962"/>
    <lineage>
        <taxon>Bacteria</taxon>
        <taxon>Pseudomonadati</taxon>
        <taxon>Campylobacterota</taxon>
        <taxon>Epsilonproteobacteria</taxon>
        <taxon>Campylobacterales</taxon>
        <taxon>Helicobacteraceae</taxon>
        <taxon>Helicobacter</taxon>
    </lineage>
</organism>
<comment type="function">
    <text evidence="1">This protein is located at the 30S-50S ribosomal subunit interface and may play a role in the structure and function of the aminoacyl-tRNA binding site.</text>
</comment>
<comment type="similarity">
    <text evidence="2">Belongs to the bacterial ribosomal protein bL19 family.</text>
</comment>